<feature type="chain" id="PRO_0000106723" description="Global nitrogen regulator NrpR">
    <location>
        <begin position="1"/>
        <end position="542"/>
    </location>
</feature>
<feature type="region of interest" description="Winged helix-turn-helix" evidence="4">
    <location>
        <begin position="12"/>
        <end position="77"/>
    </location>
</feature>
<feature type="region of interest" description="NRD 1" evidence="5">
    <location>
        <begin position="85"/>
        <end position="320"/>
    </location>
</feature>
<feature type="region of interest" description="NRD 2" evidence="5">
    <location>
        <begin position="321"/>
        <end position="542"/>
    </location>
</feature>
<feature type="helix" evidence="7">
    <location>
        <begin position="325"/>
        <end position="333"/>
    </location>
</feature>
<feature type="turn" evidence="7">
    <location>
        <begin position="340"/>
        <end position="343"/>
    </location>
</feature>
<feature type="strand" evidence="7">
    <location>
        <begin position="346"/>
        <end position="355"/>
    </location>
</feature>
<feature type="helix" evidence="7">
    <location>
        <begin position="356"/>
        <end position="358"/>
    </location>
</feature>
<feature type="helix" evidence="7">
    <location>
        <begin position="359"/>
        <end position="371"/>
    </location>
</feature>
<feature type="strand" evidence="7">
    <location>
        <begin position="375"/>
        <end position="384"/>
    </location>
</feature>
<feature type="strand" evidence="7">
    <location>
        <begin position="386"/>
        <end position="394"/>
    </location>
</feature>
<feature type="helix" evidence="7">
    <location>
        <begin position="397"/>
        <end position="405"/>
    </location>
</feature>
<feature type="strand" evidence="7">
    <location>
        <begin position="410"/>
        <end position="420"/>
    </location>
</feature>
<feature type="strand" evidence="7">
    <location>
        <begin position="425"/>
        <end position="433"/>
    </location>
</feature>
<feature type="helix" evidence="7">
    <location>
        <begin position="440"/>
        <end position="443"/>
    </location>
</feature>
<feature type="helix" evidence="7">
    <location>
        <begin position="445"/>
        <end position="447"/>
    </location>
</feature>
<feature type="strand" evidence="7">
    <location>
        <begin position="450"/>
        <end position="462"/>
    </location>
</feature>
<feature type="turn" evidence="7">
    <location>
        <begin position="463"/>
        <end position="465"/>
    </location>
</feature>
<feature type="helix" evidence="7">
    <location>
        <begin position="466"/>
        <end position="476"/>
    </location>
</feature>
<feature type="strand" evidence="7">
    <location>
        <begin position="481"/>
        <end position="484"/>
    </location>
</feature>
<feature type="strand" evidence="7">
    <location>
        <begin position="500"/>
        <end position="506"/>
    </location>
</feature>
<feature type="helix" evidence="7">
    <location>
        <begin position="510"/>
        <end position="517"/>
    </location>
</feature>
<feature type="strand" evidence="7">
    <location>
        <begin position="523"/>
        <end position="532"/>
    </location>
</feature>
<feature type="helix" evidence="7">
    <location>
        <begin position="533"/>
        <end position="535"/>
    </location>
</feature>
<feature type="strand" evidence="7">
    <location>
        <begin position="536"/>
        <end position="538"/>
    </location>
</feature>
<organism>
    <name type="scientific">Methanocaldococcus jannaschii (strain ATCC 43067 / DSM 2661 / JAL-1 / JCM 10045 / NBRC 100440)</name>
    <name type="common">Methanococcus jannaschii</name>
    <dbReference type="NCBI Taxonomy" id="243232"/>
    <lineage>
        <taxon>Archaea</taxon>
        <taxon>Methanobacteriati</taxon>
        <taxon>Methanobacteriota</taxon>
        <taxon>Methanomada group</taxon>
        <taxon>Methanococci</taxon>
        <taxon>Methanococcales</taxon>
        <taxon>Methanocaldococcaceae</taxon>
        <taxon>Methanocaldococcus</taxon>
    </lineage>
</organism>
<keyword id="KW-0002">3D-structure</keyword>
<keyword id="KW-0238">DNA-binding</keyword>
<keyword id="KW-1185">Reference proteome</keyword>
<keyword id="KW-0677">Repeat</keyword>
<keyword id="KW-0678">Repressor</keyword>
<keyword id="KW-0804">Transcription</keyword>
<keyword id="KW-0805">Transcription regulation</keyword>
<dbReference type="EMBL" id="L77117">
    <property type="protein sequence ID" value="AAB98143.1"/>
    <property type="molecule type" value="Genomic_DNA"/>
</dbReference>
<dbReference type="PIR" id="H64319">
    <property type="entry name" value="H64319"/>
</dbReference>
<dbReference type="PDB" id="3NEK">
    <property type="method" value="X-ray"/>
    <property type="resolution" value="2.50 A"/>
    <property type="chains" value="A/B=306-542"/>
</dbReference>
<dbReference type="PDBsum" id="3NEK"/>
<dbReference type="SMR" id="Q57623"/>
<dbReference type="DIP" id="DIP-59016N"/>
<dbReference type="STRING" id="243232.MJ_0159"/>
<dbReference type="PaxDb" id="243232-MJ_0159"/>
<dbReference type="DNASU" id="1451006"/>
<dbReference type="EnsemblBacteria" id="AAB98143">
    <property type="protein sequence ID" value="AAB98143"/>
    <property type="gene ID" value="MJ_0159"/>
</dbReference>
<dbReference type="KEGG" id="mja:MJ_0159"/>
<dbReference type="eggNOG" id="arCOG02710">
    <property type="taxonomic scope" value="Archaea"/>
</dbReference>
<dbReference type="HOGENOM" id="CLU_507744_0_0_2"/>
<dbReference type="InParanoid" id="Q57623"/>
<dbReference type="PhylomeDB" id="Q57623"/>
<dbReference type="EvolutionaryTrace" id="Q57623"/>
<dbReference type="Proteomes" id="UP000000805">
    <property type="component" value="Chromosome"/>
</dbReference>
<dbReference type="GO" id="GO:0003677">
    <property type="term" value="F:DNA binding"/>
    <property type="evidence" value="ECO:0007669"/>
    <property type="project" value="UniProtKB-KW"/>
</dbReference>
<dbReference type="Gene3D" id="3.30.70.1360">
    <property type="entry name" value="mj0159-like"/>
    <property type="match status" value="4"/>
</dbReference>
<dbReference type="InterPro" id="IPR002846">
    <property type="entry name" value="NRD"/>
</dbReference>
<dbReference type="InterPro" id="IPR038982">
    <property type="entry name" value="NrpR"/>
</dbReference>
<dbReference type="InterPro" id="IPR036984">
    <property type="entry name" value="NrpR_dom_sf"/>
</dbReference>
<dbReference type="InterPro" id="IPR013668">
    <property type="entry name" value="RNase_R_HTH_12"/>
</dbReference>
<dbReference type="InterPro" id="IPR036390">
    <property type="entry name" value="WH_DNA-bd_sf"/>
</dbReference>
<dbReference type="PANTHER" id="PTHR41964">
    <property type="entry name" value="GLOBAL NITROGEN REGULATOR NRPR"/>
    <property type="match status" value="1"/>
</dbReference>
<dbReference type="PANTHER" id="PTHR41964:SF1">
    <property type="entry name" value="GLOBAL NITROGEN REGULATOR NRPR"/>
    <property type="match status" value="1"/>
</dbReference>
<dbReference type="Pfam" id="PF08461">
    <property type="entry name" value="HTH_12"/>
    <property type="match status" value="1"/>
</dbReference>
<dbReference type="Pfam" id="PF01995">
    <property type="entry name" value="NRD1_2"/>
    <property type="match status" value="2"/>
</dbReference>
<dbReference type="SUPFAM" id="SSF46785">
    <property type="entry name" value="Winged helix' DNA-binding domain"/>
    <property type="match status" value="1"/>
</dbReference>
<protein>
    <recommendedName>
        <fullName evidence="4">Global nitrogen regulator NrpR</fullName>
    </recommendedName>
    <alternativeName>
        <fullName evidence="4">Nitrogen regulatory protein R</fullName>
    </alternativeName>
</protein>
<gene>
    <name evidence="3" type="primary">nrpR</name>
    <name evidence="6" type="ordered locus">MJ0159</name>
</gene>
<comment type="function">
    <text evidence="1">Transcriptional repressor of nitrogen fixation and assimilation genes. Binds to two tandem operators in the glnA and nif promoters, thereby blocking transcription of the genes.</text>
</comment>
<comment type="activity regulation">
    <text evidence="2">Under nitrogen limitation, binding of the intracellular nitrogen metabolite 2-oxoglutarate to NrpR decreases the binding affinity of NrpR to DNA, leading to initiation of transcription.</text>
</comment>
<comment type="subunit">
    <text evidence="2">Homodimer.</text>
</comment>
<comment type="miscellaneous">
    <text evidence="2">Adopts different quaternary structures in its active apo state compared with its inhibited 2-oxoglutarate-bound state. In the 2-oxoglutarate-bound state, NrpR is inhibited from binding to DNA because its DNA-binding domains are too far apart to recognize the operator DNA sequence.</text>
</comment>
<comment type="similarity">
    <text evidence="4">Belongs to the NrpR family.</text>
</comment>
<proteinExistence type="evidence at protein level"/>
<evidence type="ECO:0000250" key="1">
    <source>
        <dbReference type="UniProtKB" id="Q6LZL7"/>
    </source>
</evidence>
<evidence type="ECO:0000269" key="2">
    <source>
    </source>
</evidence>
<evidence type="ECO:0000303" key="3">
    <source>
    </source>
</evidence>
<evidence type="ECO:0000305" key="4"/>
<evidence type="ECO:0000305" key="5">
    <source>
    </source>
</evidence>
<evidence type="ECO:0000312" key="6">
    <source>
        <dbReference type="EMBL" id="AAB98143.1"/>
    </source>
</evidence>
<evidence type="ECO:0007829" key="7">
    <source>
        <dbReference type="PDB" id="3NEK"/>
    </source>
</evidence>
<sequence length="542" mass="61195">MIIMADLDRKLIEILDILSKSKEPVGAKIIAKELNKRGYKIGERAVRYHLKLLDGMKLTKKVGYAGRVITERGLEELEKANISYRLGSIYSNILEKTISANYRFGYVVINRCQVYADFNDVLKIIKSVYESGLAVGDRVGIIDREKFVEINTLCSLNFDNILLQNGIFPLHVCAGVVKYEDGKPVEFKEIIDYKSTSIDPLRAFIEKKETDVMGIIENGEGYLPANFRYFGVEFLERFETILEIDELKCIISYGTENVLGLDVGDDKVGVALIGGLTPIAPFVENNYCVEICPMSSIVRLESLHKLKKNPRDIVTKKANIRIKTALSKMFNAMAKVTYDIDEADGDVIVNTAFIDKKYLDEAFDILKEAYKKGLGISDRFGIVEENDRIKIQTICAVTLDGIFLRNSVPLIPKYGGILEITEDKERFIDIIGYDGSSLDPHEVFFNFVDCEKTFLAGFREVHRVAREKLEEVLKKLNWNGIKAIGEPNNELYGIGVNKDMCGVVTMGGINPLVLLKENEIPIELKAMHEVVRFSDLKSYKEI</sequence>
<reference key="1">
    <citation type="journal article" date="1996" name="Science">
        <title>Complete genome sequence of the methanogenic archaeon, Methanococcus jannaschii.</title>
        <authorList>
            <person name="Bult C.J."/>
            <person name="White O."/>
            <person name="Olsen G.J."/>
            <person name="Zhou L."/>
            <person name="Fleischmann R.D."/>
            <person name="Sutton G.G."/>
            <person name="Blake J.A."/>
            <person name="FitzGerald L.M."/>
            <person name="Clayton R.A."/>
            <person name="Gocayne J.D."/>
            <person name="Kerlavage A.R."/>
            <person name="Dougherty B.A."/>
            <person name="Tomb J.-F."/>
            <person name="Adams M.D."/>
            <person name="Reich C.I."/>
            <person name="Overbeek R."/>
            <person name="Kirkness E.F."/>
            <person name="Weinstock K.G."/>
            <person name="Merrick J.M."/>
            <person name="Glodek A."/>
            <person name="Scott J.L."/>
            <person name="Geoghagen N.S.M."/>
            <person name="Weidman J.F."/>
            <person name="Fuhrmann J.L."/>
            <person name="Nguyen D."/>
            <person name="Utterback T.R."/>
            <person name="Kelley J.M."/>
            <person name="Peterson J.D."/>
            <person name="Sadow P.W."/>
            <person name="Hanna M.C."/>
            <person name="Cotton M.D."/>
            <person name="Roberts K.M."/>
            <person name="Hurst M.A."/>
            <person name="Kaine B.P."/>
            <person name="Borodovsky M."/>
            <person name="Klenk H.-P."/>
            <person name="Fraser C.M."/>
            <person name="Smith H.O."/>
            <person name="Woese C.R."/>
            <person name="Venter J.C."/>
        </authorList>
    </citation>
    <scope>NUCLEOTIDE SEQUENCE [LARGE SCALE GENOMIC DNA]</scope>
    <source>
        <strain>ATCC 43067 / DSM 2661 / JAL-1 / JCM 10045 / NBRC 100440</strain>
    </source>
</reference>
<reference key="2">
    <citation type="journal article" date="2010" name="Structure">
        <title>Structural underpinnings of nitrogen regulation by the prototypical nitrogen-responsive transcriptional factor NrpR.</title>
        <authorList>
            <person name="Wisedchaisri G."/>
            <person name="Dranow D.M."/>
            <person name="Lie T.J."/>
            <person name="Bonanno J.B."/>
            <person name="Patskovsky Y."/>
            <person name="Ozyurt S.A."/>
            <person name="Sauder J.M."/>
            <person name="Almo S.C."/>
            <person name="Wasserman S.R."/>
            <person name="Burley S.K."/>
            <person name="Leigh J.A."/>
            <person name="Gonen T."/>
        </authorList>
    </citation>
    <scope>X-RAY CRYSTALLOGRAPHY (2.50 ANGSTROMS) OF 306-542</scope>
    <scope>DNA-BINDING</scope>
    <scope>ACTIVITY REGULATION</scope>
    <scope>SUBUNIT</scope>
</reference>
<name>NRPR_METJA</name>
<accession>Q57623</accession>